<name>F16P1_HUMAN</name>
<keyword id="KW-0002">3D-structure</keyword>
<keyword id="KW-0007">Acetylation</keyword>
<keyword id="KW-0021">Allosteric enzyme</keyword>
<keyword id="KW-0119">Carbohydrate metabolism</keyword>
<keyword id="KW-0903">Direct protein sequencing</keyword>
<keyword id="KW-0225">Disease variant</keyword>
<keyword id="KW-0312">Gluconeogenesis</keyword>
<keyword id="KW-0378">Hydrolase</keyword>
<keyword id="KW-0460">Magnesium</keyword>
<keyword id="KW-0479">Metal-binding</keyword>
<keyword id="KW-0597">Phosphoprotein</keyword>
<keyword id="KW-1267">Proteomics identification</keyword>
<keyword id="KW-1185">Reference proteome</keyword>
<evidence type="ECO:0000250" key="1">
    <source>
        <dbReference type="UniProtKB" id="P00636"/>
    </source>
</evidence>
<evidence type="ECO:0000250" key="2">
    <source>
        <dbReference type="UniProtKB" id="P00637"/>
    </source>
</evidence>
<evidence type="ECO:0000250" key="3">
    <source>
        <dbReference type="UniProtKB" id="Q9QXD6"/>
    </source>
</evidence>
<evidence type="ECO:0000269" key="4">
    <source>
    </source>
</evidence>
<evidence type="ECO:0000269" key="5">
    <source>
    </source>
</evidence>
<evidence type="ECO:0000269" key="6">
    <source>
    </source>
</evidence>
<evidence type="ECO:0000269" key="7">
    <source>
    </source>
</evidence>
<evidence type="ECO:0000269" key="8">
    <source>
    </source>
</evidence>
<evidence type="ECO:0000269" key="9">
    <source>
    </source>
</evidence>
<evidence type="ECO:0000269" key="10">
    <source>
    </source>
</evidence>
<evidence type="ECO:0000269" key="11">
    <source>
    </source>
</evidence>
<evidence type="ECO:0000269" key="12">
    <source>
    </source>
</evidence>
<evidence type="ECO:0000269" key="13">
    <source>
    </source>
</evidence>
<evidence type="ECO:0000269" key="14">
    <source>
    </source>
</evidence>
<evidence type="ECO:0000269" key="15">
    <source>
    </source>
</evidence>
<evidence type="ECO:0000269" key="16">
    <source>
    </source>
</evidence>
<evidence type="ECO:0000269" key="17">
    <source>
    </source>
</evidence>
<evidence type="ECO:0000269" key="18">
    <source>
    </source>
</evidence>
<evidence type="ECO:0000269" key="19">
    <source>
    </source>
</evidence>
<evidence type="ECO:0000269" key="20">
    <source ref="6"/>
</evidence>
<evidence type="ECO:0000269" key="21">
    <source ref="7"/>
</evidence>
<evidence type="ECO:0000305" key="22"/>
<evidence type="ECO:0007744" key="23">
    <source>
        <dbReference type="PDB" id="1FTA"/>
    </source>
</evidence>
<evidence type="ECO:0007744" key="24">
    <source>
        <dbReference type="PDB" id="2FHY"/>
    </source>
</evidence>
<evidence type="ECO:0007744" key="25">
    <source>
    </source>
</evidence>
<evidence type="ECO:0007829" key="26">
    <source>
        <dbReference type="PDB" id="5PZW"/>
    </source>
</evidence>
<evidence type="ECO:0007829" key="27">
    <source>
        <dbReference type="PDB" id="7C9Q"/>
    </source>
</evidence>
<evidence type="ECO:0007829" key="28">
    <source>
        <dbReference type="PDB" id="7CVH"/>
    </source>
</evidence>
<evidence type="ECO:0007829" key="29">
    <source>
        <dbReference type="PDB" id="7CWE"/>
    </source>
</evidence>
<evidence type="ECO:0007829" key="30">
    <source>
        <dbReference type="PDB" id="7WJV"/>
    </source>
</evidence>
<accession>P09467</accession>
<accession>O75571</accession>
<accession>Q53F94</accession>
<accession>Q96E46</accession>
<organism>
    <name type="scientific">Homo sapiens</name>
    <name type="common">Human</name>
    <dbReference type="NCBI Taxonomy" id="9606"/>
    <lineage>
        <taxon>Eukaryota</taxon>
        <taxon>Metazoa</taxon>
        <taxon>Chordata</taxon>
        <taxon>Craniata</taxon>
        <taxon>Vertebrata</taxon>
        <taxon>Euteleostomi</taxon>
        <taxon>Mammalia</taxon>
        <taxon>Eutheria</taxon>
        <taxon>Euarchontoglires</taxon>
        <taxon>Primates</taxon>
        <taxon>Haplorrhini</taxon>
        <taxon>Catarrhini</taxon>
        <taxon>Hominidae</taxon>
        <taxon>Homo</taxon>
    </lineage>
</organism>
<feature type="initiator methionine" description="Removed" evidence="2 18">
    <location>
        <position position="1"/>
    </location>
</feature>
<feature type="chain" id="PRO_0000200498" description="Fructose-1,6-bisphosphatase 1">
    <location>
        <begin position="2"/>
        <end position="338"/>
    </location>
</feature>
<feature type="binding site" evidence="16 23">
    <location>
        <begin position="18"/>
        <end position="22"/>
    </location>
    <ligand>
        <name>AMP</name>
        <dbReference type="ChEBI" id="CHEBI:456215"/>
    </ligand>
</feature>
<feature type="binding site" evidence="16 23">
    <location>
        <begin position="28"/>
        <end position="32"/>
    </location>
    <ligand>
        <name>AMP</name>
        <dbReference type="ChEBI" id="CHEBI:456215"/>
    </ligand>
</feature>
<feature type="binding site" evidence="1">
    <location>
        <position position="69"/>
    </location>
    <ligand>
        <name>Mg(2+)</name>
        <dbReference type="ChEBI" id="CHEBI:18420"/>
        <label>1</label>
    </ligand>
</feature>
<feature type="binding site" evidence="1">
    <location>
        <position position="98"/>
    </location>
    <ligand>
        <name>Mg(2+)</name>
        <dbReference type="ChEBI" id="CHEBI:18420"/>
        <label>1</label>
    </ligand>
</feature>
<feature type="binding site" evidence="1">
    <location>
        <position position="98"/>
    </location>
    <ligand>
        <name>Mg(2+)</name>
        <dbReference type="ChEBI" id="CHEBI:18420"/>
        <label>2</label>
    </ligand>
</feature>
<feature type="binding site" evidence="16 23">
    <location>
        <begin position="113"/>
        <end position="114"/>
    </location>
    <ligand>
        <name>AMP</name>
        <dbReference type="ChEBI" id="CHEBI:456215"/>
    </ligand>
</feature>
<feature type="binding site" evidence="1">
    <location>
        <position position="119"/>
    </location>
    <ligand>
        <name>Mg(2+)</name>
        <dbReference type="ChEBI" id="CHEBI:18420"/>
        <label>2</label>
    </ligand>
</feature>
<feature type="binding site" evidence="24">
    <location>
        <position position="119"/>
    </location>
    <ligand>
        <name>Mg(2+)</name>
        <dbReference type="ChEBI" id="CHEBI:18420"/>
        <label>3</label>
    </ligand>
</feature>
<feature type="binding site" evidence="1">
    <location>
        <position position="121"/>
    </location>
    <ligand>
        <name>Mg(2+)</name>
        <dbReference type="ChEBI" id="CHEBI:18420"/>
        <label>2</label>
    </ligand>
</feature>
<feature type="binding site" evidence="1">
    <location>
        <begin position="122"/>
        <end position="125"/>
    </location>
    <ligand>
        <name>substrate</name>
    </ligand>
</feature>
<feature type="binding site" evidence="24">
    <location>
        <position position="122"/>
    </location>
    <ligand>
        <name>Mg(2+)</name>
        <dbReference type="ChEBI" id="CHEBI:18420"/>
        <label>3</label>
    </ligand>
</feature>
<feature type="binding site" evidence="16 23">
    <location>
        <position position="141"/>
    </location>
    <ligand>
        <name>AMP</name>
        <dbReference type="ChEBI" id="CHEBI:456215"/>
    </ligand>
</feature>
<feature type="binding site" evidence="1">
    <location>
        <begin position="213"/>
        <end position="216"/>
    </location>
    <ligand>
        <name>substrate</name>
    </ligand>
</feature>
<feature type="binding site" evidence="1">
    <location>
        <begin position="244"/>
        <end position="249"/>
    </location>
    <ligand>
        <name>substrate</name>
    </ligand>
</feature>
<feature type="binding site" evidence="1">
    <location>
        <position position="265"/>
    </location>
    <ligand>
        <name>substrate</name>
    </ligand>
</feature>
<feature type="binding site" evidence="1">
    <location>
        <begin position="275"/>
        <end position="277"/>
    </location>
    <ligand>
        <name>substrate</name>
    </ligand>
</feature>
<feature type="binding site" evidence="24">
    <location>
        <position position="281"/>
    </location>
    <ligand>
        <name>Mg(2+)</name>
        <dbReference type="ChEBI" id="CHEBI:18420"/>
        <label>3</label>
    </ligand>
</feature>
<feature type="modified residue" description="N-acetylalanine" evidence="2">
    <location>
        <position position="2"/>
    </location>
</feature>
<feature type="modified residue" description="N6-succinyllysine" evidence="3">
    <location>
        <position position="151"/>
    </location>
</feature>
<feature type="modified residue" description="Phosphotyrosine" evidence="3">
    <location>
        <position position="216"/>
    </location>
</feature>
<feature type="modified residue" description="Phosphotyrosine" evidence="3">
    <location>
        <position position="245"/>
    </location>
</feature>
<feature type="modified residue" description="Phosphotyrosine" evidence="25">
    <location>
        <position position="265"/>
    </location>
</feature>
<feature type="sequence variant" id="VAR_075492" description="In FBP1D; uncertain significance; dbSNP:rs766005419." evidence="13">
    <original>R</original>
    <variation>W</variation>
    <location>
        <position position="158"/>
    </location>
</feature>
<feature type="sequence variant" id="VAR_002380" description="In FBP1D; dbSNP:rs121918188." evidence="19">
    <original>G</original>
    <variation>S</variation>
    <location>
        <position position="164"/>
    </location>
</feature>
<feature type="sequence variant" id="VAR_002381" description="In FBP1D; dbSNP:rs121918189." evidence="19">
    <original>A</original>
    <variation>D</variation>
    <location>
        <position position="177"/>
    </location>
</feature>
<feature type="sequence variant" id="VAR_038812" description="In FBP1D; dbSNP:rs121918191." evidence="5">
    <original>F</original>
    <variation>S</variation>
    <location>
        <position position="194"/>
    </location>
</feature>
<feature type="sequence variant" id="VAR_022212" description="In dbSNP:rs1769259." evidence="4 14 15 17 18 20 21">
    <original>R</original>
    <variation>K</variation>
    <location>
        <position position="218"/>
    </location>
</feature>
<feature type="sequence variant" id="VAR_022213" description="In dbSNP:rs2297085." evidence="21">
    <original>F</original>
    <variation>I</variation>
    <location>
        <position position="233"/>
    </location>
</feature>
<feature type="sequence variant" id="VAR_022214" description="In dbSNP:rs28369761." evidence="21">
    <original>R</original>
    <variation>L</variation>
    <location>
        <position position="255"/>
    </location>
</feature>
<feature type="sequence variant" id="VAR_038813" description="In FBP1D; dbSNP:rs121918192." evidence="5">
    <original>P</original>
    <variation>R</variation>
    <location>
        <position position="284"/>
    </location>
</feature>
<feature type="sequence variant" id="VAR_002382" evidence="19">
    <original>V</original>
    <variation>A</variation>
    <location>
        <position position="325"/>
    </location>
</feature>
<feature type="mutagenesis site" description="Increased affinity towards Ca(2+) and Mg(2+)." evidence="9">
    <original>Q</original>
    <variation>E</variation>
    <location>
        <position position="70"/>
    </location>
</feature>
<feature type="mutagenesis site" description="Reduced activity." evidence="18">
    <original>D</original>
    <variation>A</variation>
    <location>
        <position position="119"/>
    </location>
</feature>
<feature type="mutagenesis site" description="Reduced activity." evidence="18">
    <original>D</original>
    <variation>A</variation>
    <location>
        <position position="122"/>
    </location>
</feature>
<feature type="sequence conflict" description="In Ref. 2; AAA35817 and 5; AAC25774." evidence="22" ref="2 5">
    <original>G</original>
    <variation>A</variation>
    <location>
        <position position="215"/>
    </location>
</feature>
<feature type="sequence conflict" description="In Ref. 5; AAC25774." evidence="22" ref="5">
    <original>A</original>
    <variation>G</variation>
    <location>
        <position position="337"/>
    </location>
</feature>
<feature type="helix" evidence="30">
    <location>
        <begin position="14"/>
        <end position="25"/>
    </location>
</feature>
<feature type="helix" evidence="30">
    <location>
        <begin position="30"/>
        <end position="49"/>
    </location>
</feature>
<feature type="turn" evidence="30">
    <location>
        <begin position="50"/>
        <end position="53"/>
    </location>
</feature>
<feature type="helix" evidence="30">
    <location>
        <begin position="54"/>
        <end position="57"/>
    </location>
</feature>
<feature type="turn" evidence="30">
    <location>
        <begin position="58"/>
        <end position="61"/>
    </location>
</feature>
<feature type="helix" evidence="30">
    <location>
        <begin position="71"/>
        <end position="87"/>
    </location>
</feature>
<feature type="turn" evidence="30">
    <location>
        <begin position="88"/>
        <end position="90"/>
    </location>
</feature>
<feature type="strand" evidence="30">
    <location>
        <begin position="92"/>
        <end position="97"/>
    </location>
</feature>
<feature type="strand" evidence="29">
    <location>
        <begin position="100"/>
        <end position="102"/>
    </location>
</feature>
<feature type="helix" evidence="30">
    <location>
        <begin position="108"/>
        <end position="110"/>
    </location>
</feature>
<feature type="strand" evidence="30">
    <location>
        <begin position="111"/>
        <end position="119"/>
    </location>
</feature>
<feature type="turn" evidence="30">
    <location>
        <begin position="124"/>
        <end position="130"/>
    </location>
</feature>
<feature type="strand" evidence="30">
    <location>
        <begin position="133"/>
        <end position="141"/>
    </location>
</feature>
<feature type="strand" evidence="26">
    <location>
        <begin position="145"/>
        <end position="147"/>
    </location>
</feature>
<feature type="helix" evidence="30">
    <location>
        <begin position="150"/>
        <end position="153"/>
    </location>
</feature>
<feature type="helix" evidence="30">
    <location>
        <begin position="157"/>
        <end position="159"/>
    </location>
</feature>
<feature type="strand" evidence="30">
    <location>
        <begin position="161"/>
        <end position="178"/>
    </location>
</feature>
<feature type="strand" evidence="30">
    <location>
        <begin position="181"/>
        <end position="187"/>
    </location>
</feature>
<feature type="turn" evidence="30">
    <location>
        <begin position="189"/>
        <end position="191"/>
    </location>
</feature>
<feature type="strand" evidence="30">
    <location>
        <begin position="194"/>
        <end position="198"/>
    </location>
</feature>
<feature type="strand" evidence="30">
    <location>
        <begin position="208"/>
        <end position="211"/>
    </location>
</feature>
<feature type="helix" evidence="30">
    <location>
        <begin position="214"/>
        <end position="219"/>
    </location>
</feature>
<feature type="helix" evidence="30">
    <location>
        <begin position="222"/>
        <end position="232"/>
    </location>
</feature>
<feature type="strand" evidence="28">
    <location>
        <begin position="235"/>
        <end position="237"/>
    </location>
</feature>
<feature type="helix" evidence="30">
    <location>
        <begin position="249"/>
        <end position="259"/>
    </location>
</feature>
<feature type="strand" evidence="30">
    <location>
        <begin position="262"/>
        <end position="265"/>
    </location>
</feature>
<feature type="strand" evidence="27">
    <location>
        <begin position="269"/>
        <end position="271"/>
    </location>
</feature>
<feature type="strand" evidence="30">
    <location>
        <begin position="275"/>
        <end position="277"/>
    </location>
</feature>
<feature type="turn" evidence="30">
    <location>
        <begin position="278"/>
        <end position="281"/>
    </location>
</feature>
<feature type="helix" evidence="30">
    <location>
        <begin position="282"/>
        <end position="291"/>
    </location>
</feature>
<feature type="strand" evidence="30">
    <location>
        <begin position="295"/>
        <end position="297"/>
    </location>
</feature>
<feature type="strand" evidence="30">
    <location>
        <begin position="299"/>
        <end position="302"/>
    </location>
</feature>
<feature type="helix" evidence="30">
    <location>
        <begin position="303"/>
        <end position="305"/>
    </location>
</feature>
<feature type="strand" evidence="30">
    <location>
        <begin position="317"/>
        <end position="320"/>
    </location>
</feature>
<feature type="helix" evidence="30">
    <location>
        <begin position="322"/>
        <end position="334"/>
    </location>
</feature>
<protein>
    <recommendedName>
        <fullName>Fructose-1,6-bisphosphatase 1</fullName>
        <shortName>FBPase 1</shortName>
        <ecNumber evidence="9 18">3.1.3.11</ecNumber>
    </recommendedName>
    <alternativeName>
        <fullName>D-fructose-1,6-bisphosphate 1-phosphohydrolase 1</fullName>
    </alternativeName>
    <alternativeName>
        <fullName>Liver FBPase</fullName>
    </alternativeName>
</protein>
<dbReference type="EC" id="3.1.3.11" evidence="9 18"/>
<dbReference type="EMBL" id="M19922">
    <property type="protein sequence ID" value="AAA35517.1"/>
    <property type="molecule type" value="mRNA"/>
</dbReference>
<dbReference type="EMBL" id="L10320">
    <property type="protein sequence ID" value="AAA35817.1"/>
    <property type="molecule type" value="mRNA"/>
</dbReference>
<dbReference type="EMBL" id="D26054">
    <property type="protein sequence ID" value="BAA05051.1"/>
    <property type="molecule type" value="mRNA"/>
</dbReference>
<dbReference type="EMBL" id="D26055">
    <property type="protein sequence ID" value="BAA05052.1"/>
    <property type="molecule type" value="mRNA"/>
</dbReference>
<dbReference type="EMBL" id="D26056">
    <property type="protein sequence ID" value="BAA05053.1"/>
    <property type="molecule type" value="mRNA"/>
</dbReference>
<dbReference type="EMBL" id="U21931">
    <property type="protein sequence ID" value="AAC50207.1"/>
    <property type="status" value="ALT_SEQ"/>
    <property type="molecule type" value="Genomic_DNA"/>
</dbReference>
<dbReference type="EMBL" id="U21925">
    <property type="protein sequence ID" value="AAC50207.1"/>
    <property type="status" value="JOINED"/>
    <property type="molecule type" value="Genomic_DNA"/>
</dbReference>
<dbReference type="EMBL" id="U21926">
    <property type="protein sequence ID" value="AAC50207.1"/>
    <property type="status" value="JOINED"/>
    <property type="molecule type" value="Genomic_DNA"/>
</dbReference>
<dbReference type="EMBL" id="U21927">
    <property type="protein sequence ID" value="AAC50207.1"/>
    <property type="status" value="JOINED"/>
    <property type="molecule type" value="Genomic_DNA"/>
</dbReference>
<dbReference type="EMBL" id="U21929">
    <property type="protein sequence ID" value="AAC50207.1"/>
    <property type="status" value="JOINED"/>
    <property type="molecule type" value="Genomic_DNA"/>
</dbReference>
<dbReference type="EMBL" id="U21930">
    <property type="protein sequence ID" value="AAC50207.1"/>
    <property type="status" value="JOINED"/>
    <property type="molecule type" value="Genomic_DNA"/>
</dbReference>
<dbReference type="EMBL" id="AF073475">
    <property type="protein sequence ID" value="AAC25774.1"/>
    <property type="molecule type" value="mRNA"/>
</dbReference>
<dbReference type="EMBL" id="AK223395">
    <property type="protein sequence ID" value="BAD97115.1"/>
    <property type="molecule type" value="mRNA"/>
</dbReference>
<dbReference type="EMBL" id="AY866483">
    <property type="protein sequence ID" value="AAW34363.1"/>
    <property type="molecule type" value="Genomic_DNA"/>
</dbReference>
<dbReference type="EMBL" id="AL161728">
    <property type="status" value="NOT_ANNOTATED_CDS"/>
    <property type="molecule type" value="Genomic_DNA"/>
</dbReference>
<dbReference type="EMBL" id="BC012927">
    <property type="protein sequence ID" value="AAH12927.1"/>
    <property type="molecule type" value="mRNA"/>
</dbReference>
<dbReference type="EMBL" id="U47919">
    <property type="protein sequence ID" value="AAA89098.1"/>
    <property type="molecule type" value="mRNA"/>
</dbReference>
<dbReference type="EMBL" id="U47918">
    <property type="protein sequence ID" value="AAA89097.1"/>
    <property type="molecule type" value="mRNA"/>
</dbReference>
<dbReference type="CCDS" id="CCDS6712.1"/>
<dbReference type="PIR" id="A46666">
    <property type="entry name" value="A46666"/>
</dbReference>
<dbReference type="RefSeq" id="NP_000498.2">
    <property type="nucleotide sequence ID" value="NM_000507.3"/>
</dbReference>
<dbReference type="RefSeq" id="NP_001121100.1">
    <property type="nucleotide sequence ID" value="NM_001127628.2"/>
</dbReference>
<dbReference type="PDB" id="1FTA">
    <property type="method" value="X-ray"/>
    <property type="resolution" value="2.30 A"/>
    <property type="chains" value="A/B/C/D=2-338"/>
</dbReference>
<dbReference type="PDB" id="2FHY">
    <property type="method" value="X-ray"/>
    <property type="resolution" value="2.95 A"/>
    <property type="chains" value="A/D/H/L=1-338"/>
</dbReference>
<dbReference type="PDB" id="2FIE">
    <property type="method" value="X-ray"/>
    <property type="resolution" value="2.81 A"/>
    <property type="chains" value="A/D/H/L=1-338"/>
</dbReference>
<dbReference type="PDB" id="2FIX">
    <property type="method" value="X-ray"/>
    <property type="resolution" value="3.50 A"/>
    <property type="chains" value="A/D/H/L=1-338"/>
</dbReference>
<dbReference type="PDB" id="2JJK">
    <property type="method" value="X-ray"/>
    <property type="resolution" value="2.00 A"/>
    <property type="chains" value="A/B/C/D=1-338"/>
</dbReference>
<dbReference type="PDB" id="2VT5">
    <property type="method" value="X-ray"/>
    <property type="resolution" value="2.20 A"/>
    <property type="chains" value="A/B/C/D/E/F/G/H=1-338"/>
</dbReference>
<dbReference type="PDB" id="2WBB">
    <property type="method" value="X-ray"/>
    <property type="resolution" value="2.22 A"/>
    <property type="chains" value="A/B/C/D/E/F/G/H=1-338"/>
</dbReference>
<dbReference type="PDB" id="2WBD">
    <property type="method" value="X-ray"/>
    <property type="resolution" value="2.40 A"/>
    <property type="chains" value="A/B/C/D/E/F/G/H=1-338"/>
</dbReference>
<dbReference type="PDB" id="2Y5K">
    <property type="method" value="X-ray"/>
    <property type="resolution" value="2.10 A"/>
    <property type="chains" value="A/B/C/D=1-338"/>
</dbReference>
<dbReference type="PDB" id="2Y5L">
    <property type="method" value="X-ray"/>
    <property type="resolution" value="2.20 A"/>
    <property type="chains" value="A/B/C/D/E/F/G/H=1-338"/>
</dbReference>
<dbReference type="PDB" id="3A29">
    <property type="method" value="X-ray"/>
    <property type="resolution" value="2.60 A"/>
    <property type="chains" value="A/B/C/D=2-338"/>
</dbReference>
<dbReference type="PDB" id="3KBZ">
    <property type="method" value="X-ray"/>
    <property type="resolution" value="2.45 A"/>
    <property type="chains" value="A/B/C/D=2-338"/>
</dbReference>
<dbReference type="PDB" id="3KC0">
    <property type="method" value="X-ray"/>
    <property type="resolution" value="2.80 A"/>
    <property type="chains" value="A/B/C/D=2-338"/>
</dbReference>
<dbReference type="PDB" id="3KC1">
    <property type="method" value="X-ray"/>
    <property type="resolution" value="2.25 A"/>
    <property type="chains" value="A/B/C/D=2-338"/>
</dbReference>
<dbReference type="PDB" id="4MJO">
    <property type="method" value="X-ray"/>
    <property type="resolution" value="2.40 A"/>
    <property type="chains" value="A/B/C/D/E/F/G/H=1-338"/>
</dbReference>
<dbReference type="PDB" id="5LDZ">
    <property type="method" value="X-ray"/>
    <property type="resolution" value="2.20 A"/>
    <property type="chains" value="A/B/C/D/E/F=1-338"/>
</dbReference>
<dbReference type="PDB" id="5PZQ">
    <property type="method" value="X-ray"/>
    <property type="resolution" value="2.70 A"/>
    <property type="chains" value="A/B/C/D=1-338"/>
</dbReference>
<dbReference type="PDB" id="5PZR">
    <property type="method" value="X-ray"/>
    <property type="resolution" value="1.90 A"/>
    <property type="chains" value="A/B/C/D=1-338"/>
</dbReference>
<dbReference type="PDB" id="5PZS">
    <property type="method" value="X-ray"/>
    <property type="resolution" value="2.37 A"/>
    <property type="chains" value="A/B/C/D=1-338"/>
</dbReference>
<dbReference type="PDB" id="5PZT">
    <property type="method" value="X-ray"/>
    <property type="resolution" value="2.80 A"/>
    <property type="chains" value="A/B/C/D/E/F/G/H=1-338"/>
</dbReference>
<dbReference type="PDB" id="5PZU">
    <property type="method" value="X-ray"/>
    <property type="resolution" value="1.90 A"/>
    <property type="chains" value="A/B/C/D=1-338"/>
</dbReference>
<dbReference type="PDB" id="5PZV">
    <property type="method" value="X-ray"/>
    <property type="resolution" value="2.00 A"/>
    <property type="chains" value="A/B/C/D=1-338"/>
</dbReference>
<dbReference type="PDB" id="5PZW">
    <property type="method" value="X-ray"/>
    <property type="resolution" value="2.00 A"/>
    <property type="chains" value="A/B/C/D=1-338"/>
</dbReference>
<dbReference type="PDB" id="5PZX">
    <property type="method" value="X-ray"/>
    <property type="resolution" value="2.75 A"/>
    <property type="chains" value="A/B/C/D/E/F/G/H=1-338"/>
</dbReference>
<dbReference type="PDB" id="5PZY">
    <property type="method" value="X-ray"/>
    <property type="resolution" value="2.21 A"/>
    <property type="chains" value="A/B/C/D/E/F/G/H=1-338"/>
</dbReference>
<dbReference type="PDB" id="5PZZ">
    <property type="method" value="X-ray"/>
    <property type="resolution" value="2.50 A"/>
    <property type="chains" value="A/B/C/D/E/F/G/H=1-338"/>
</dbReference>
<dbReference type="PDB" id="5Q00">
    <property type="method" value="X-ray"/>
    <property type="resolution" value="2.60 A"/>
    <property type="chains" value="A/B/C/D/E/F/G/H=1-338"/>
</dbReference>
<dbReference type="PDB" id="5Q01">
    <property type="method" value="X-ray"/>
    <property type="resolution" value="2.60 A"/>
    <property type="chains" value="A/B/C/D/E/F/G/H=1-338"/>
</dbReference>
<dbReference type="PDB" id="5Q02">
    <property type="method" value="X-ray"/>
    <property type="resolution" value="2.10 A"/>
    <property type="chains" value="A/B/C/D=1-338"/>
</dbReference>
<dbReference type="PDB" id="5Q03">
    <property type="method" value="X-ray"/>
    <property type="resolution" value="2.31 A"/>
    <property type="chains" value="A/B/C/D/E/F/G/H=1-338"/>
</dbReference>
<dbReference type="PDB" id="5Q04">
    <property type="method" value="X-ray"/>
    <property type="resolution" value="2.50 A"/>
    <property type="chains" value="A/B/C/D/E/F/G/H=1-338"/>
</dbReference>
<dbReference type="PDB" id="5Q05">
    <property type="method" value="X-ray"/>
    <property type="resolution" value="2.20 A"/>
    <property type="chains" value="A/B/C/D/E/F/G/H=1-338"/>
</dbReference>
<dbReference type="PDB" id="5Q06">
    <property type="method" value="X-ray"/>
    <property type="resolution" value="2.40 A"/>
    <property type="chains" value="A/B/C/D=1-338"/>
</dbReference>
<dbReference type="PDB" id="5Q07">
    <property type="method" value="X-ray"/>
    <property type="resolution" value="2.42 A"/>
    <property type="chains" value="A/B/C/D/E/F/G/H=1-338"/>
</dbReference>
<dbReference type="PDB" id="5Q08">
    <property type="method" value="X-ray"/>
    <property type="resolution" value="2.20 A"/>
    <property type="chains" value="A/B/C/D/E/F/G/H=1-338"/>
</dbReference>
<dbReference type="PDB" id="5Q09">
    <property type="method" value="X-ray"/>
    <property type="resolution" value="1.90 A"/>
    <property type="chains" value="A/B/C/D/E/F/G/H=1-338"/>
</dbReference>
<dbReference type="PDB" id="5Q0A">
    <property type="method" value="X-ray"/>
    <property type="resolution" value="2.30 A"/>
    <property type="chains" value="A/B/C/D=1-338"/>
</dbReference>
<dbReference type="PDB" id="5Q0B">
    <property type="method" value="X-ray"/>
    <property type="resolution" value="2.30 A"/>
    <property type="chains" value="A/B/C/D=1-338"/>
</dbReference>
<dbReference type="PDB" id="6LS5">
    <property type="method" value="X-ray"/>
    <property type="resolution" value="2.03 A"/>
    <property type="chains" value="A/B/C/D=1-338"/>
</dbReference>
<dbReference type="PDB" id="6LW2">
    <property type="method" value="X-ray"/>
    <property type="resolution" value="2.40 A"/>
    <property type="chains" value="A/B/C/D=1-338"/>
</dbReference>
<dbReference type="PDB" id="7C9Q">
    <property type="method" value="X-ray"/>
    <property type="resolution" value="1.88 A"/>
    <property type="chains" value="A/B/C/D=1-338"/>
</dbReference>
<dbReference type="PDB" id="7CVH">
    <property type="method" value="X-ray"/>
    <property type="resolution" value="2.09 A"/>
    <property type="chains" value="A/B/C/D=1-338"/>
</dbReference>
<dbReference type="PDB" id="7CVN">
    <property type="method" value="X-ray"/>
    <property type="resolution" value="2.75 A"/>
    <property type="chains" value="A/B/C/D=1-338"/>
</dbReference>
<dbReference type="PDB" id="7CWE">
    <property type="method" value="X-ray"/>
    <property type="resolution" value="3.00 A"/>
    <property type="chains" value="A/B=1-338"/>
</dbReference>
<dbReference type="PDB" id="7EZF">
    <property type="method" value="X-ray"/>
    <property type="resolution" value="2.76 A"/>
    <property type="chains" value="A/B/C/D=1-338"/>
</dbReference>
<dbReference type="PDB" id="7EZP">
    <property type="method" value="X-ray"/>
    <property type="resolution" value="2.80 A"/>
    <property type="chains" value="A/B/C/D=1-338"/>
</dbReference>
<dbReference type="PDB" id="7EZR">
    <property type="method" value="X-ray"/>
    <property type="resolution" value="3.27 A"/>
    <property type="chains" value="A/B/C/D=1-338"/>
</dbReference>
<dbReference type="PDB" id="7WJV">
    <property type="method" value="X-ray"/>
    <property type="resolution" value="1.72 A"/>
    <property type="chains" value="A/B/C/D=1-338"/>
</dbReference>
<dbReference type="PDB" id="7WVB">
    <property type="method" value="X-ray"/>
    <property type="resolution" value="2.09 A"/>
    <property type="chains" value="A/B/C/D=1-338"/>
</dbReference>
<dbReference type="PDB" id="8XBK">
    <property type="method" value="X-ray"/>
    <property type="resolution" value="2.42 A"/>
    <property type="chains" value="A/B/C/D=1-338"/>
</dbReference>
<dbReference type="PDBsum" id="1FTA"/>
<dbReference type="PDBsum" id="2FHY"/>
<dbReference type="PDBsum" id="2FIE"/>
<dbReference type="PDBsum" id="2FIX"/>
<dbReference type="PDBsum" id="2JJK"/>
<dbReference type="PDBsum" id="2VT5"/>
<dbReference type="PDBsum" id="2WBB"/>
<dbReference type="PDBsum" id="2WBD"/>
<dbReference type="PDBsum" id="2Y5K"/>
<dbReference type="PDBsum" id="2Y5L"/>
<dbReference type="PDBsum" id="3A29"/>
<dbReference type="PDBsum" id="3KBZ"/>
<dbReference type="PDBsum" id="3KC0"/>
<dbReference type="PDBsum" id="3KC1"/>
<dbReference type="PDBsum" id="4MJO"/>
<dbReference type="PDBsum" id="5LDZ"/>
<dbReference type="PDBsum" id="5PZQ"/>
<dbReference type="PDBsum" id="5PZR"/>
<dbReference type="PDBsum" id="5PZS"/>
<dbReference type="PDBsum" id="5PZT"/>
<dbReference type="PDBsum" id="5PZU"/>
<dbReference type="PDBsum" id="5PZV"/>
<dbReference type="PDBsum" id="5PZW"/>
<dbReference type="PDBsum" id="5PZX"/>
<dbReference type="PDBsum" id="5PZY"/>
<dbReference type="PDBsum" id="5PZZ"/>
<dbReference type="PDBsum" id="5Q00"/>
<dbReference type="PDBsum" id="5Q01"/>
<dbReference type="PDBsum" id="5Q02"/>
<dbReference type="PDBsum" id="5Q03"/>
<dbReference type="PDBsum" id="5Q04"/>
<dbReference type="PDBsum" id="5Q05"/>
<dbReference type="PDBsum" id="5Q06"/>
<dbReference type="PDBsum" id="5Q07"/>
<dbReference type="PDBsum" id="5Q08"/>
<dbReference type="PDBsum" id="5Q09"/>
<dbReference type="PDBsum" id="5Q0A"/>
<dbReference type="PDBsum" id="5Q0B"/>
<dbReference type="PDBsum" id="6LS5"/>
<dbReference type="PDBsum" id="6LW2"/>
<dbReference type="PDBsum" id="7C9Q"/>
<dbReference type="PDBsum" id="7CVH"/>
<dbReference type="PDBsum" id="7CVN"/>
<dbReference type="PDBsum" id="7CWE"/>
<dbReference type="PDBsum" id="7EZF"/>
<dbReference type="PDBsum" id="7EZP"/>
<dbReference type="PDBsum" id="7EZR"/>
<dbReference type="PDBsum" id="7WJV"/>
<dbReference type="PDBsum" id="7WVB"/>
<dbReference type="PDBsum" id="8XBK"/>
<dbReference type="SMR" id="P09467"/>
<dbReference type="BioGRID" id="108497">
    <property type="interactions" value="351"/>
</dbReference>
<dbReference type="DIP" id="DIP-46677N"/>
<dbReference type="FunCoup" id="P09467">
    <property type="interactions" value="1367"/>
</dbReference>
<dbReference type="IntAct" id="P09467">
    <property type="interactions" value="56"/>
</dbReference>
<dbReference type="MINT" id="P09467"/>
<dbReference type="STRING" id="9606.ENSP00000408025"/>
<dbReference type="BindingDB" id="P09467"/>
<dbReference type="ChEMBL" id="CHEMBL3975"/>
<dbReference type="DrugBank" id="DB02778">
    <property type="generic name" value="2,5-Anhydroglucitol-1,6-Biphosphate"/>
</dbReference>
<dbReference type="DrugBank" id="DB07312">
    <property type="generic name" value="2,5-DICHLORO-N-(5-CHLORO-1,3-BENZOXAZOL-2-YL)BENZENESULFONAMIDE"/>
</dbReference>
<dbReference type="DrugBank" id="DB07321">
    <property type="generic name" value="2,5-DICHLORO-N-[5-METHOXY-7-(6-METHOXYPYRIDIN-3-YL)-1,3-BENZOXAZOL-2-YL]BENZENESULFONAMIDE"/>
</dbReference>
<dbReference type="DrugBank" id="DB07292">
    <property type="generic name" value="4-(2-amino-1,3-thiazol-4-yl)phenol"/>
</dbReference>
<dbReference type="DrugBank" id="DB08484">
    <property type="generic name" value="4-AMINO-N-[(2-SULFANYLETHYL)CARBAMOYL]BENZENESULFONAMIDE"/>
</dbReference>
<dbReference type="DrugBank" id="DB00131">
    <property type="generic name" value="Adenosine phosphate"/>
</dbReference>
<dbReference type="DrugBank" id="DB04493">
    <property type="generic name" value="Fructose-6-phosphate"/>
</dbReference>
<dbReference type="DrugBank" id="DB05518">
    <property type="generic name" value="Managlinat dialanetil"/>
</dbReference>
<dbReference type="DrugBank" id="DB05053">
    <property type="generic name" value="MB-07803"/>
</dbReference>
<dbReference type="DrugBank" id="DB04175">
    <property type="generic name" value="Mdl-29951"/>
</dbReference>
<dbReference type="DrugBank" id="DB07270">
    <property type="generic name" value="N-[7-(3-AMINOPHENYL)-5-METHOXY-1,3-BENZOXAZOL-2-YL]-2,5-DICHLOROBENZENESULFONAMIDE"/>
</dbReference>
<dbReference type="DrugBank" id="DB02848">
    <property type="generic name" value="{4-[3-(6,7-Diethoxy-Quinazolin-4-Ylamino)-Phenyl]-Thiazol-2-Yl}-Methanol"/>
</dbReference>
<dbReference type="DrugCentral" id="P09467"/>
<dbReference type="MoonProt" id="P09467"/>
<dbReference type="DEPOD" id="FBP1"/>
<dbReference type="GlyGen" id="P09467">
    <property type="glycosylation" value="3 sites, 1 O-linked glycan (2 sites)"/>
</dbReference>
<dbReference type="iPTMnet" id="P09467"/>
<dbReference type="PhosphoSitePlus" id="P09467"/>
<dbReference type="SwissPalm" id="P09467"/>
<dbReference type="BioMuta" id="FBP1"/>
<dbReference type="DMDM" id="311033495"/>
<dbReference type="CPTAC" id="CPTAC-200"/>
<dbReference type="CPTAC" id="CPTAC-201"/>
<dbReference type="jPOST" id="P09467"/>
<dbReference type="MassIVE" id="P09467"/>
<dbReference type="PaxDb" id="9606-ENSP00000408025"/>
<dbReference type="PeptideAtlas" id="P09467"/>
<dbReference type="ProteomicsDB" id="52223"/>
<dbReference type="Pumba" id="P09467"/>
<dbReference type="Antibodypedia" id="1620">
    <property type="antibodies" value="283 antibodies from 34 providers"/>
</dbReference>
<dbReference type="DNASU" id="2203"/>
<dbReference type="Ensembl" id="ENST00000375326.9">
    <property type="protein sequence ID" value="ENSP00000364475.5"/>
    <property type="gene ID" value="ENSG00000165140.12"/>
</dbReference>
<dbReference type="Ensembl" id="ENST00000415431.5">
    <property type="protein sequence ID" value="ENSP00000408025.1"/>
    <property type="gene ID" value="ENSG00000165140.12"/>
</dbReference>
<dbReference type="GeneID" id="2203"/>
<dbReference type="KEGG" id="hsa:2203"/>
<dbReference type="MANE-Select" id="ENST00000375326.9">
    <property type="protein sequence ID" value="ENSP00000364475.5"/>
    <property type="RefSeq nucleotide sequence ID" value="NM_000507.4"/>
    <property type="RefSeq protein sequence ID" value="NP_000498.2"/>
</dbReference>
<dbReference type="UCSC" id="uc004auw.5">
    <property type="organism name" value="human"/>
</dbReference>
<dbReference type="AGR" id="HGNC:3606"/>
<dbReference type="CTD" id="2203"/>
<dbReference type="DisGeNET" id="2203"/>
<dbReference type="GeneCards" id="FBP1"/>
<dbReference type="GeneReviews" id="FBP1"/>
<dbReference type="HGNC" id="HGNC:3606">
    <property type="gene designation" value="FBP1"/>
</dbReference>
<dbReference type="HPA" id="ENSG00000165140">
    <property type="expression patterns" value="Tissue enhanced (intestine, kidney, liver)"/>
</dbReference>
<dbReference type="MalaCards" id="FBP1"/>
<dbReference type="MIM" id="229700">
    <property type="type" value="phenotype"/>
</dbReference>
<dbReference type="MIM" id="611570">
    <property type="type" value="gene"/>
</dbReference>
<dbReference type="neXtProt" id="NX_P09467"/>
<dbReference type="OpenTargets" id="ENSG00000165140"/>
<dbReference type="Orphanet" id="348">
    <property type="disease" value="Fructose-1,6-bisphosphatase deficiency"/>
</dbReference>
<dbReference type="PharmGKB" id="PA28018"/>
<dbReference type="VEuPathDB" id="HostDB:ENSG00000165140"/>
<dbReference type="eggNOG" id="KOG1458">
    <property type="taxonomic scope" value="Eukaryota"/>
</dbReference>
<dbReference type="GeneTree" id="ENSGT00390000015513"/>
<dbReference type="HOGENOM" id="CLU_039977_1_0_1"/>
<dbReference type="InParanoid" id="P09467"/>
<dbReference type="OMA" id="YIPENCP"/>
<dbReference type="OrthoDB" id="10256725at2759"/>
<dbReference type="PAN-GO" id="P09467">
    <property type="GO annotations" value="8 GO annotations based on evolutionary models"/>
</dbReference>
<dbReference type="PhylomeDB" id="P09467"/>
<dbReference type="TreeFam" id="TF314824"/>
<dbReference type="BioCyc" id="MetaCyc:HS09189-MONOMER"/>
<dbReference type="BRENDA" id="3.1.3.11">
    <property type="organism ID" value="2681"/>
</dbReference>
<dbReference type="PathwayCommons" id="P09467"/>
<dbReference type="Reactome" id="R-HSA-70263">
    <property type="pathway name" value="Gluconeogenesis"/>
</dbReference>
<dbReference type="SABIO-RK" id="P09467"/>
<dbReference type="SignaLink" id="P09467"/>
<dbReference type="SIGNOR" id="P09467"/>
<dbReference type="UniPathway" id="UPA00138"/>
<dbReference type="BioGRID-ORCS" id="2203">
    <property type="hits" value="32 hits in 1172 CRISPR screens"/>
</dbReference>
<dbReference type="ChiTaRS" id="FBP1">
    <property type="organism name" value="human"/>
</dbReference>
<dbReference type="EvolutionaryTrace" id="P09467"/>
<dbReference type="GenomeRNAi" id="2203"/>
<dbReference type="Pharos" id="P09467">
    <property type="development level" value="Tchem"/>
</dbReference>
<dbReference type="PRO" id="PR:P09467"/>
<dbReference type="Proteomes" id="UP000005640">
    <property type="component" value="Chromosome 9"/>
</dbReference>
<dbReference type="RNAct" id="P09467">
    <property type="molecule type" value="protein"/>
</dbReference>
<dbReference type="Bgee" id="ENSG00000165140">
    <property type="expression patterns" value="Expressed in right lobe of liver and 130 other cell types or tissues"/>
</dbReference>
<dbReference type="ExpressionAtlas" id="P09467">
    <property type="expression patterns" value="baseline and differential"/>
</dbReference>
<dbReference type="GO" id="GO:0005737">
    <property type="term" value="C:cytoplasm"/>
    <property type="evidence" value="ECO:0000314"/>
    <property type="project" value="UniProtKB"/>
</dbReference>
<dbReference type="GO" id="GO:0005829">
    <property type="term" value="C:cytosol"/>
    <property type="evidence" value="ECO:0000318"/>
    <property type="project" value="GO_Central"/>
</dbReference>
<dbReference type="GO" id="GO:0070062">
    <property type="term" value="C:extracellular exosome"/>
    <property type="evidence" value="ECO:0007005"/>
    <property type="project" value="UniProtKB"/>
</dbReference>
<dbReference type="GO" id="GO:0005634">
    <property type="term" value="C:nucleus"/>
    <property type="evidence" value="ECO:0000315"/>
    <property type="project" value="CAFA"/>
</dbReference>
<dbReference type="GO" id="GO:0016208">
    <property type="term" value="F:AMP binding"/>
    <property type="evidence" value="ECO:0000314"/>
    <property type="project" value="UniProtKB"/>
</dbReference>
<dbReference type="GO" id="GO:0042132">
    <property type="term" value="F:fructose 1,6-bisphosphate 1-phosphatase activity"/>
    <property type="evidence" value="ECO:0000314"/>
    <property type="project" value="UniProtKB"/>
</dbReference>
<dbReference type="GO" id="GO:0042802">
    <property type="term" value="F:identical protein binding"/>
    <property type="evidence" value="ECO:0000353"/>
    <property type="project" value="UniProtKB"/>
</dbReference>
<dbReference type="GO" id="GO:0046872">
    <property type="term" value="F:metal ion binding"/>
    <property type="evidence" value="ECO:0000315"/>
    <property type="project" value="UniProtKB"/>
</dbReference>
<dbReference type="GO" id="GO:0048029">
    <property type="term" value="F:monosaccharide binding"/>
    <property type="evidence" value="ECO:0000250"/>
    <property type="project" value="UniProtKB"/>
</dbReference>
<dbReference type="GO" id="GO:0061629">
    <property type="term" value="F:RNA polymerase II-specific DNA-binding transcription factor binding"/>
    <property type="evidence" value="ECO:0000315"/>
    <property type="project" value="CAFA"/>
</dbReference>
<dbReference type="GO" id="GO:0071475">
    <property type="term" value="P:cellular hyperosmotic salinity response"/>
    <property type="evidence" value="ECO:0007669"/>
    <property type="project" value="Ensembl"/>
</dbReference>
<dbReference type="GO" id="GO:0071477">
    <property type="term" value="P:cellular hypotonic salinity response"/>
    <property type="evidence" value="ECO:0007669"/>
    <property type="project" value="Ensembl"/>
</dbReference>
<dbReference type="GO" id="GO:0071320">
    <property type="term" value="P:cellular response to cAMP"/>
    <property type="evidence" value="ECO:0007669"/>
    <property type="project" value="Ensembl"/>
</dbReference>
<dbReference type="GO" id="GO:0032869">
    <property type="term" value="P:cellular response to insulin stimulus"/>
    <property type="evidence" value="ECO:0007669"/>
    <property type="project" value="Ensembl"/>
</dbReference>
<dbReference type="GO" id="GO:0071286">
    <property type="term" value="P:cellular response to magnesium ion"/>
    <property type="evidence" value="ECO:0000314"/>
    <property type="project" value="UniProtKB"/>
</dbReference>
<dbReference type="GO" id="GO:1904628">
    <property type="term" value="P:cellular response to phorbol 13-acetate 12-myristate"/>
    <property type="evidence" value="ECO:0007669"/>
    <property type="project" value="Ensembl"/>
</dbReference>
<dbReference type="GO" id="GO:0097403">
    <property type="term" value="P:cellular response to raffinose"/>
    <property type="evidence" value="ECO:0007669"/>
    <property type="project" value="Ensembl"/>
</dbReference>
<dbReference type="GO" id="GO:0071466">
    <property type="term" value="P:cellular response to xenobiotic stimulus"/>
    <property type="evidence" value="ECO:0000314"/>
    <property type="project" value="UniProtKB"/>
</dbReference>
<dbReference type="GO" id="GO:0030388">
    <property type="term" value="P:fructose 1,6-bisphosphate metabolic process"/>
    <property type="evidence" value="ECO:0000318"/>
    <property type="project" value="GO_Central"/>
</dbReference>
<dbReference type="GO" id="GO:0006002">
    <property type="term" value="P:fructose 6-phosphate metabolic process"/>
    <property type="evidence" value="ECO:0000314"/>
    <property type="project" value="UniProtKB"/>
</dbReference>
<dbReference type="GO" id="GO:0006000">
    <property type="term" value="P:fructose metabolic process"/>
    <property type="evidence" value="ECO:0000318"/>
    <property type="project" value="GO_Central"/>
</dbReference>
<dbReference type="GO" id="GO:0006094">
    <property type="term" value="P:gluconeogenesis"/>
    <property type="evidence" value="ECO:0000315"/>
    <property type="project" value="UniProtKB"/>
</dbReference>
<dbReference type="GO" id="GO:0030308">
    <property type="term" value="P:negative regulation of cell growth"/>
    <property type="evidence" value="ECO:0000314"/>
    <property type="project" value="UniProtKB"/>
</dbReference>
<dbReference type="GO" id="GO:0045820">
    <property type="term" value="P:negative regulation of glycolytic process"/>
    <property type="evidence" value="ECO:0000314"/>
    <property type="project" value="UniProtKB"/>
</dbReference>
<dbReference type="GO" id="GO:0046580">
    <property type="term" value="P:negative regulation of Ras protein signal transduction"/>
    <property type="evidence" value="ECO:0000314"/>
    <property type="project" value="UniProtKB"/>
</dbReference>
<dbReference type="GO" id="GO:0000122">
    <property type="term" value="P:negative regulation of transcription by RNA polymerase II"/>
    <property type="evidence" value="ECO:0000315"/>
    <property type="project" value="CAFA"/>
</dbReference>
<dbReference type="GO" id="GO:0006111">
    <property type="term" value="P:regulation of gluconeogenesis"/>
    <property type="evidence" value="ECO:0000315"/>
    <property type="project" value="UniProtKB"/>
</dbReference>
<dbReference type="GO" id="GO:0031667">
    <property type="term" value="P:response to nutrient levels"/>
    <property type="evidence" value="ECO:0007669"/>
    <property type="project" value="Ensembl"/>
</dbReference>
<dbReference type="CDD" id="cd00354">
    <property type="entry name" value="FBPase"/>
    <property type="match status" value="1"/>
</dbReference>
<dbReference type="FunFam" id="3.30.540.10:FF:000037">
    <property type="entry name" value="Fructose-1,6-bisphosphatase 1"/>
    <property type="match status" value="1"/>
</dbReference>
<dbReference type="FunFam" id="3.40.190.80:FF:000001">
    <property type="entry name" value="Fructose-1,6-bisphosphatase class 1"/>
    <property type="match status" value="1"/>
</dbReference>
<dbReference type="Gene3D" id="3.40.190.80">
    <property type="match status" value="1"/>
</dbReference>
<dbReference type="Gene3D" id="3.30.540.10">
    <property type="entry name" value="Fructose-1,6-Bisphosphatase, subunit A, domain 1"/>
    <property type="match status" value="1"/>
</dbReference>
<dbReference type="HAMAP" id="MF_01855">
    <property type="entry name" value="FBPase_class1"/>
    <property type="match status" value="1"/>
</dbReference>
<dbReference type="InterPro" id="IPR044015">
    <property type="entry name" value="FBPase_C_dom"/>
</dbReference>
<dbReference type="InterPro" id="IPR000146">
    <property type="entry name" value="FBPase_class-1"/>
</dbReference>
<dbReference type="InterPro" id="IPR033391">
    <property type="entry name" value="FBPase_N"/>
</dbReference>
<dbReference type="InterPro" id="IPR028343">
    <property type="entry name" value="FBPtase"/>
</dbReference>
<dbReference type="InterPro" id="IPR020548">
    <property type="entry name" value="Fructose_bisphosphatase_AS"/>
</dbReference>
<dbReference type="NCBIfam" id="NF006778">
    <property type="entry name" value="PRK09293.1-1"/>
    <property type="match status" value="1"/>
</dbReference>
<dbReference type="PANTHER" id="PTHR11556:SF11">
    <property type="entry name" value="FRUCTOSE-1,6-BISPHOSPHATASE 1"/>
    <property type="match status" value="1"/>
</dbReference>
<dbReference type="PANTHER" id="PTHR11556">
    <property type="entry name" value="FRUCTOSE-1,6-BISPHOSPHATASE-RELATED"/>
    <property type="match status" value="1"/>
</dbReference>
<dbReference type="Pfam" id="PF00316">
    <property type="entry name" value="FBPase"/>
    <property type="match status" value="1"/>
</dbReference>
<dbReference type="Pfam" id="PF18913">
    <property type="entry name" value="FBPase_C"/>
    <property type="match status" value="1"/>
</dbReference>
<dbReference type="PIRSF" id="PIRSF500210">
    <property type="entry name" value="FBPtase"/>
    <property type="match status" value="1"/>
</dbReference>
<dbReference type="PIRSF" id="PIRSF000904">
    <property type="entry name" value="FBPtase_SBPase"/>
    <property type="match status" value="1"/>
</dbReference>
<dbReference type="PRINTS" id="PR00115">
    <property type="entry name" value="F16BPHPHTASE"/>
</dbReference>
<dbReference type="SUPFAM" id="SSF56655">
    <property type="entry name" value="Carbohydrate phosphatase"/>
    <property type="match status" value="1"/>
</dbReference>
<dbReference type="PROSITE" id="PS00124">
    <property type="entry name" value="FBPASE"/>
    <property type="match status" value="1"/>
</dbReference>
<gene>
    <name type="primary">FBP1</name>
    <name type="synonym">FBP</name>
</gene>
<comment type="function">
    <text evidence="8 10 12">Catalyzes the hydrolysis of fructose 1,6-bisphosphate to fructose 6-phosphate in the presence of divalent cations, acting as a rate-limiting enzyme in gluconeogenesis. Plays a role in regulating glucose sensing and insulin secretion of pancreatic beta-cells. Appears to modulate glycerol gluconeogenesis in liver. Important regulator of appetite and adiposity; increased expression of the protein in liver after nutrient excess increases circulating satiety hormones and reduces appetite-stimulating neuropeptides and thus seems to provide a feedback mechanism to limit weight gain.</text>
</comment>
<comment type="catalytic activity">
    <reaction evidence="9 18">
        <text>beta-D-fructose 1,6-bisphosphate + H2O = beta-D-fructose 6-phosphate + phosphate</text>
        <dbReference type="Rhea" id="RHEA:11064"/>
        <dbReference type="ChEBI" id="CHEBI:15377"/>
        <dbReference type="ChEBI" id="CHEBI:32966"/>
        <dbReference type="ChEBI" id="CHEBI:43474"/>
        <dbReference type="ChEBI" id="CHEBI:57634"/>
        <dbReference type="EC" id="3.1.3.11"/>
    </reaction>
</comment>
<comment type="cofactor">
    <cofactor evidence="16">
        <name>Mg(2+)</name>
        <dbReference type="ChEBI" id="CHEBI:18420"/>
    </cofactor>
    <text evidence="1">Binds 3 Mg(2+) ions per subunit.</text>
</comment>
<comment type="activity regulation">
    <text evidence="6 7 9 11 16">Subject to complex allosteric regulation. The enzyme can assume an active R-state, or an inactive T-state. Intermediate conformations may exist. AMP acts as an allosteric inhibitor. AMP binding affects the turnover of bound substrate and not the affinity for substrate. Fructose 2,6-bisphosphate acts as a competitive inhibitor. Fructose 2,6-bisphosphate and AMP have synergistic effects.</text>
</comment>
<comment type="biophysicochemical properties">
    <kinetics>
        <KM evidence="9">2.7 uM for fructose 1,6-biphosphate</KM>
        <text>The kinetic constants are determined for the recombinant enzyme expressed in E.coli.</text>
    </kinetics>
</comment>
<comment type="pathway">
    <text>Carbohydrate biosynthesis; gluconeogenesis.</text>
</comment>
<comment type="subunit">
    <text evidence="6 7 11 16">Homotetramer.</text>
</comment>
<comment type="interaction">
    <interactant intactId="EBI-712740">
        <id>P09467</id>
    </interactant>
    <interactant intactId="EBI-719094">
        <id>O00499</id>
        <label>BIN1</label>
    </interactant>
    <organismsDiffer>false</organismsDiffer>
    <experiments>4</experiments>
</comment>
<comment type="interaction">
    <interactant intactId="EBI-712740">
        <id>P09467</id>
    </interactant>
    <interactant intactId="EBI-447470">
        <id>Q99814</id>
        <label>EPAS1</label>
    </interactant>
    <organismsDiffer>false</organismsDiffer>
    <experiments>4</experiments>
</comment>
<comment type="interaction">
    <interactant intactId="EBI-712740">
        <id>P09467</id>
    </interactant>
    <interactant intactId="EBI-712740">
        <id>P09467</id>
        <label>FBP1</label>
    </interactant>
    <organismsDiffer>false</organismsDiffer>
    <experiments>15</experiments>
</comment>
<comment type="interaction">
    <interactant intactId="EBI-712740">
        <id>P09467</id>
    </interactant>
    <interactant intactId="EBI-719781">
        <id>O00757</id>
        <label>FBP2</label>
    </interactant>
    <organismsDiffer>false</organismsDiffer>
    <experiments>18</experiments>
</comment>
<comment type="interaction">
    <interactant intactId="EBI-712740">
        <id>P09467</id>
    </interactant>
    <interactant intactId="EBI-740459">
        <id>P51116</id>
        <label>FXR2</label>
    </interactant>
    <organismsDiffer>false</organismsDiffer>
    <experiments>3</experiments>
</comment>
<comment type="interaction">
    <interactant intactId="EBI-712740">
        <id>P09467</id>
    </interactant>
    <interactant intactId="EBI-447269">
        <id>Q16665</id>
        <label>HIF1A</label>
    </interactant>
    <organismsDiffer>false</organismsDiffer>
    <experiments>5</experiments>
</comment>
<comment type="interaction">
    <interactant intactId="EBI-712740">
        <id>P09467</id>
    </interactant>
    <interactant intactId="EBI-466029">
        <id>P42858</id>
        <label>HTT</label>
    </interactant>
    <organismsDiffer>false</organismsDiffer>
    <experiments>3</experiments>
</comment>
<comment type="tissue specificity">
    <text evidence="10">Expressed in pancreatic islets.</text>
</comment>
<comment type="induction">
    <text evidence="10">Up-regulated in pancreatic islets of individuals with type 2 diabetes.</text>
</comment>
<comment type="disease" evidence="5 13 19">
    <disease id="DI-01634">
        <name>Fructose-1,6-bisphosphatase deficiency</name>
        <acronym>FBP1D</acronym>
        <description>An autosomal recessive metabolic disorder characterized by impaired gluconeogenesis, and episodes of hypoglycemia and metabolic acidosis that can be lethal in newborn infants or young children.</description>
        <dbReference type="MIM" id="229700"/>
    </disease>
    <text>The disease is caused by variants affecting the gene represented in this entry.</text>
</comment>
<comment type="similarity">
    <text evidence="22">Belongs to the FBPase class 1 family.</text>
</comment>
<comment type="sequence caution" evidence="22">
    <conflict type="erroneous gene model prediction">
        <sequence resource="EMBL-CDS" id="AAC50207"/>
    </conflict>
</comment>
<comment type="online information" name="Wikipedia">
    <link uri="https://en.wikipedia.org/wiki/Fructose_bisphosphatase"/>
    <text>Fructose bisphosphatase entry</text>
</comment>
<sequence>MADQAPFDTDVNTLTRFVMEEGRKARGTGELTQLLNSLCTAVKAISSAVRKAGIAHLYGIAGSTNVTGDQVKKLDVLSNDLVMNMLKSSFATCVLVSEEDKHAIIVEPEKRGKYVVCFDPLDGSSNIDCLVSVGTIFGIYRKKSTDEPSEKDALQPGRNLVAAGYALYGSATMLVLAMDCGVNCFMLDPAIGEFILVDKDVKIKKKGKIYSLNEGYARDFDPAVTEYIQRKKFPPDNSAPYGARYVGSMVADVHRTLVYGGIFLYPANKKSPNGKLRLLYECNPMAYVMEKAGGMATTGKEAVLDVIPTDIHQRAPVILGSPDDVLEFLKVYEKHSAQ</sequence>
<reference key="1">
    <citation type="journal article" date="1988" name="Proc. Natl. Acad. Sci. U.S.A.">
        <title>Activation of the fructose 1,6-bisphosphatase gene by 1,25-dihydroxyvitamin D3 during monocytic differentiation.</title>
        <authorList>
            <person name="Solomon D.H."/>
            <person name="Raynal M.-C."/>
            <person name="Tejwani G.A."/>
            <person name="Cayre Y.E."/>
        </authorList>
    </citation>
    <scope>NUCLEOTIDE SEQUENCE [MRNA]</scope>
    <scope>VARIANT LYS-218</scope>
</reference>
<reference key="2">
    <citation type="journal article" date="1993" name="J. Biol. Chem.">
        <title>Isolation of a human liver fructose-1,6-bisphosphatase cDNA and expression of the protein in Escherichia coli. Role of Asp-118 and Asp-121 in catalysis.</title>
        <authorList>
            <person name="El-Maghrabi M.R."/>
            <person name="Gidh-Jain M."/>
            <person name="Austin L.R."/>
            <person name="Pilkis S.J."/>
        </authorList>
    </citation>
    <scope>NUCLEOTIDE SEQUENCE [MRNA]</scope>
    <scope>PROTEIN SEQUENCE OF 2-11</scope>
    <scope>CATALYTIC ACTIVITY</scope>
    <scope>MUTAGENESIS OF ASP-119 AND ASP-122</scope>
    <scope>VARIANT LYS-218</scope>
    <source>
        <tissue>Liver</tissue>
    </source>
</reference>
<reference key="3">
    <citation type="journal article" date="1994" name="Biochem. Biophys. Res. Commun.">
        <title>cDNA sequences encoding human fructose 1,6-bisphosphatase from monocytes, liver and kidney: application of monocytes to molecular analysis of human fructose 1,6-bisphosphatase deficiency.</title>
        <authorList>
            <person name="Kikawa Y."/>
            <person name="Inuzuka M."/>
            <person name="Takano T."/>
            <person name="Shigematsu Y."/>
            <person name="Nakai A."/>
            <person name="Yamamoto Y."/>
            <person name="Jin B.Y."/>
            <person name="Koga J."/>
            <person name="Taketo A."/>
            <person name="Sudo M."/>
        </authorList>
    </citation>
    <scope>NUCLEOTIDE SEQUENCE [MRNA]</scope>
    <scope>VARIANT LYS-218</scope>
    <source>
        <tissue>Kidney</tissue>
        <tissue>Liver</tissue>
        <tissue>Monocyte</tissue>
    </source>
</reference>
<reference key="4">
    <citation type="journal article" date="1995" name="Genomics">
        <title>Human fructose-1,6-bisphosphatase gene (FBP1): exon-intron organization, localization to chromosome bands 9q22.2-q22.3, and mutation screening in subjects with fructose-1,6-bisphosphatase deficiency.</title>
        <authorList>
            <person name="El-Maghrabi M.R."/>
            <person name="Lang A.J."/>
            <person name="Jiang W."/>
            <person name="Yamagata K."/>
            <person name="Stoffel M."/>
            <person name="Takeda J."/>
            <person name="Fernald A.A."/>
            <person name="le Beau M.M."/>
            <person name="Bell G.I."/>
            <person name="Baker L."/>
            <person name="Pilkis S.J."/>
        </authorList>
    </citation>
    <scope>NUCLEOTIDE SEQUENCE [GENOMIC DNA]</scope>
    <scope>VARIANT LYS-218</scope>
    <source>
        <tissue>Liver</tissue>
    </source>
</reference>
<reference key="5">
    <citation type="journal article" date="1999" name="Arch. Biochem. Biophys.">
        <title>cDNA sequence and kinetic properties of human lung fructose(1, 6)bisphosphatase.</title>
        <authorList>
            <person name="Skalecki K."/>
            <person name="Rakus D."/>
            <person name="Wisniewski J.R."/>
            <person name="Kolodziej J."/>
            <person name="Dzugaj A."/>
        </authorList>
    </citation>
    <scope>NUCLEOTIDE SEQUENCE [MRNA]</scope>
    <scope>CHARACTERIZATION</scope>
    <scope>VARIANT LYS-218</scope>
    <source>
        <tissue>Lung</tissue>
    </source>
</reference>
<reference key="6">
    <citation type="submission" date="2005-04" db="EMBL/GenBank/DDBJ databases">
        <authorList>
            <person name="Totoki Y."/>
            <person name="Toyoda A."/>
            <person name="Takeda T."/>
            <person name="Sakaki Y."/>
            <person name="Tanaka A."/>
            <person name="Yokoyama S."/>
        </authorList>
    </citation>
    <scope>NUCLEOTIDE SEQUENCE [LARGE SCALE MRNA]</scope>
    <scope>VARIANT LYS-218</scope>
    <source>
        <tissue>Thymus</tissue>
    </source>
</reference>
<reference key="7">
    <citation type="submission" date="2004-12" db="EMBL/GenBank/DDBJ databases">
        <authorList>
            <consortium name="NIEHS SNPs program"/>
        </authorList>
    </citation>
    <scope>NUCLEOTIDE SEQUENCE [GENOMIC DNA]</scope>
    <scope>VARIANTS LYS-218; ILE-233 AND LEU-255</scope>
</reference>
<reference key="8">
    <citation type="journal article" date="2004" name="Nature">
        <title>DNA sequence and analysis of human chromosome 9.</title>
        <authorList>
            <person name="Humphray S.J."/>
            <person name="Oliver K."/>
            <person name="Hunt A.R."/>
            <person name="Plumb R.W."/>
            <person name="Loveland J.E."/>
            <person name="Howe K.L."/>
            <person name="Andrews T.D."/>
            <person name="Searle S."/>
            <person name="Hunt S.E."/>
            <person name="Scott C.E."/>
            <person name="Jones M.C."/>
            <person name="Ainscough R."/>
            <person name="Almeida J.P."/>
            <person name="Ambrose K.D."/>
            <person name="Ashwell R.I.S."/>
            <person name="Babbage A.K."/>
            <person name="Babbage S."/>
            <person name="Bagguley C.L."/>
            <person name="Bailey J."/>
            <person name="Banerjee R."/>
            <person name="Barker D.J."/>
            <person name="Barlow K.F."/>
            <person name="Bates K."/>
            <person name="Beasley H."/>
            <person name="Beasley O."/>
            <person name="Bird C.P."/>
            <person name="Bray-Allen S."/>
            <person name="Brown A.J."/>
            <person name="Brown J.Y."/>
            <person name="Burford D."/>
            <person name="Burrill W."/>
            <person name="Burton J."/>
            <person name="Carder C."/>
            <person name="Carter N.P."/>
            <person name="Chapman J.C."/>
            <person name="Chen Y."/>
            <person name="Clarke G."/>
            <person name="Clark S.Y."/>
            <person name="Clee C.M."/>
            <person name="Clegg S."/>
            <person name="Collier R.E."/>
            <person name="Corby N."/>
            <person name="Crosier M."/>
            <person name="Cummings A.T."/>
            <person name="Davies J."/>
            <person name="Dhami P."/>
            <person name="Dunn M."/>
            <person name="Dutta I."/>
            <person name="Dyer L.W."/>
            <person name="Earthrowl M.E."/>
            <person name="Faulkner L."/>
            <person name="Fleming C.J."/>
            <person name="Frankish A."/>
            <person name="Frankland J.A."/>
            <person name="French L."/>
            <person name="Fricker D.G."/>
            <person name="Garner P."/>
            <person name="Garnett J."/>
            <person name="Ghori J."/>
            <person name="Gilbert J.G.R."/>
            <person name="Glison C."/>
            <person name="Grafham D.V."/>
            <person name="Gribble S."/>
            <person name="Griffiths C."/>
            <person name="Griffiths-Jones S."/>
            <person name="Grocock R."/>
            <person name="Guy J."/>
            <person name="Hall R.E."/>
            <person name="Hammond S."/>
            <person name="Harley J.L."/>
            <person name="Harrison E.S.I."/>
            <person name="Hart E.A."/>
            <person name="Heath P.D."/>
            <person name="Henderson C.D."/>
            <person name="Hopkins B.L."/>
            <person name="Howard P.J."/>
            <person name="Howden P.J."/>
            <person name="Huckle E."/>
            <person name="Johnson C."/>
            <person name="Johnson D."/>
            <person name="Joy A.A."/>
            <person name="Kay M."/>
            <person name="Keenan S."/>
            <person name="Kershaw J.K."/>
            <person name="Kimberley A.M."/>
            <person name="King A."/>
            <person name="Knights A."/>
            <person name="Laird G.K."/>
            <person name="Langford C."/>
            <person name="Lawlor S."/>
            <person name="Leongamornlert D.A."/>
            <person name="Leversha M."/>
            <person name="Lloyd C."/>
            <person name="Lloyd D.M."/>
            <person name="Lovell J."/>
            <person name="Martin S."/>
            <person name="Mashreghi-Mohammadi M."/>
            <person name="Matthews L."/>
            <person name="McLaren S."/>
            <person name="McLay K.E."/>
            <person name="McMurray A."/>
            <person name="Milne S."/>
            <person name="Nickerson T."/>
            <person name="Nisbett J."/>
            <person name="Nordsiek G."/>
            <person name="Pearce A.V."/>
            <person name="Peck A.I."/>
            <person name="Porter K.M."/>
            <person name="Pandian R."/>
            <person name="Pelan S."/>
            <person name="Phillimore B."/>
            <person name="Povey S."/>
            <person name="Ramsey Y."/>
            <person name="Rand V."/>
            <person name="Scharfe M."/>
            <person name="Sehra H.K."/>
            <person name="Shownkeen R."/>
            <person name="Sims S.K."/>
            <person name="Skuce C.D."/>
            <person name="Smith M."/>
            <person name="Steward C.A."/>
            <person name="Swarbreck D."/>
            <person name="Sycamore N."/>
            <person name="Tester J."/>
            <person name="Thorpe A."/>
            <person name="Tracey A."/>
            <person name="Tromans A."/>
            <person name="Thomas D.W."/>
            <person name="Wall M."/>
            <person name="Wallis J.M."/>
            <person name="West A.P."/>
            <person name="Whitehead S.L."/>
            <person name="Willey D.L."/>
            <person name="Williams S.A."/>
            <person name="Wilming L."/>
            <person name="Wray P.W."/>
            <person name="Young L."/>
            <person name="Ashurst J.L."/>
            <person name="Coulson A."/>
            <person name="Blocker H."/>
            <person name="Durbin R.M."/>
            <person name="Sulston J.E."/>
            <person name="Hubbard T."/>
            <person name="Jackson M.J."/>
            <person name="Bentley D.R."/>
            <person name="Beck S."/>
            <person name="Rogers J."/>
            <person name="Dunham I."/>
        </authorList>
    </citation>
    <scope>NUCLEOTIDE SEQUENCE [LARGE SCALE GENOMIC DNA]</scope>
</reference>
<reference key="9">
    <citation type="journal article" date="2004" name="Genome Res.">
        <title>The status, quality, and expansion of the NIH full-length cDNA project: the Mammalian Gene Collection (MGC).</title>
        <authorList>
            <consortium name="The MGC Project Team"/>
        </authorList>
    </citation>
    <scope>NUCLEOTIDE SEQUENCE [LARGE SCALE MRNA]</scope>
    <source>
        <tissue>Urinary bladder</tissue>
    </source>
</reference>
<reference key="10">
    <citation type="journal article" date="1995" name="Differentiation">
        <title>Liver fructose-1,6-bisphosphatase cDNA: trans-complementation of fission yeast and characterization of two human transcripts.</title>
        <authorList>
            <person name="Bertolotti R."/>
            <person name="Armbruster-Hilbert L."/>
            <person name="Okayama H."/>
        </authorList>
    </citation>
    <scope>NUCLEOTIDE SEQUENCE [MRNA] OF 320-338</scope>
    <source>
        <tissue>Liver</tissue>
    </source>
</reference>
<reference key="11">
    <citation type="journal article" date="2006" name="Endocrinology">
        <title>Expression of human fructose-1,6-bisphosphatase in the liver of transgenic mice results in increased glycerol gluconeogenesis.</title>
        <authorList>
            <person name="Lamont B.J."/>
            <person name="Visinoni S."/>
            <person name="Fam B.C."/>
            <person name="Kebede M."/>
            <person name="Weinrich B."/>
            <person name="Papapostolou S."/>
            <person name="Massinet H."/>
            <person name="Proietto J."/>
            <person name="Favaloro J."/>
            <person name="Andrikopoulos S."/>
        </authorList>
    </citation>
    <scope>FUNCTION</scope>
</reference>
<reference key="12">
    <citation type="journal article" date="2007" name="FEBS Lett.">
        <title>Glu 69 is essential for the high sensitivity of muscle fructose-1,6-bisphosphatase inhibition by calcium ions.</title>
        <authorList>
            <person name="Zarzycki M."/>
            <person name="Maciaszczyk E."/>
            <person name="Dzugaj A."/>
        </authorList>
    </citation>
    <scope>CATALYTIC ACTIVITY</scope>
    <scope>ACTIVITY REGULATION</scope>
    <scope>BIOPHYSICOCHEMICAL PROPERTIES</scope>
    <scope>MUTAGENESIS OF GLN-70</scope>
</reference>
<reference key="13">
    <citation type="journal article" date="2008" name="Diabetes">
        <title>Fructose-1,6-bisphosphatase overexpression in pancreatic beta-cells results in reduced insulin secretion: a new mechanism for fat-induced impairment of beta-cell function.</title>
        <authorList>
            <person name="Kebede M."/>
            <person name="Favaloro J."/>
            <person name="Gunton J.E."/>
            <person name="Laybutt D.R."/>
            <person name="Shaw M."/>
            <person name="Wong N."/>
            <person name="Fam B.C."/>
            <person name="Aston-Mourney K."/>
            <person name="Rantzau C."/>
            <person name="Zulli A."/>
            <person name="Proietto J."/>
            <person name="Andrikopoulos S."/>
        </authorList>
    </citation>
    <scope>FUNCTION</scope>
    <scope>TISSUE SPECIFICITY</scope>
    <scope>INDUCTION</scope>
</reference>
<reference key="14">
    <citation type="journal article" date="2012" name="Diabetes">
        <title>The role of liver fructose-1,6-bisphosphatase in regulating appetite and adiposity.</title>
        <authorList>
            <person name="Visinoni S."/>
            <person name="Khalid N.F."/>
            <person name="Joannides C.N."/>
            <person name="Shulkes A."/>
            <person name="Yim M."/>
            <person name="Whitehead J."/>
            <person name="Tiganis T."/>
            <person name="Lamont B.J."/>
            <person name="Favaloro J.M."/>
            <person name="Proietto J."/>
            <person name="Andrikopoulos S."/>
            <person name="Fam B.C."/>
        </authorList>
    </citation>
    <scope>FUNCTION</scope>
</reference>
<reference key="15">
    <citation type="journal article" date="2014" name="J. Proteomics">
        <title>An enzyme assisted RP-RPLC approach for in-depth analysis of human liver phosphoproteome.</title>
        <authorList>
            <person name="Bian Y."/>
            <person name="Song C."/>
            <person name="Cheng K."/>
            <person name="Dong M."/>
            <person name="Wang F."/>
            <person name="Huang J."/>
            <person name="Sun D."/>
            <person name="Wang L."/>
            <person name="Ye M."/>
            <person name="Zou H."/>
        </authorList>
    </citation>
    <scope>PHOSPHORYLATION [LARGE SCALE ANALYSIS] AT TYR-265</scope>
    <scope>IDENTIFICATION BY MASS SPECTROMETRY [LARGE SCALE ANALYSIS]</scope>
    <source>
        <tissue>Liver</tissue>
    </source>
</reference>
<reference key="16">
    <citation type="journal article" date="1993" name="Biochemistry">
        <title>Crystallographic studies of the catalytic mechanism of the neutral form of fructose-1,6-bisphosphatase.</title>
        <authorList>
            <person name="Zhang Y."/>
            <person name="Liang J.-Y."/>
            <person name="Huang S."/>
            <person name="Ke H."/>
            <person name="Lipscomb W.N."/>
        </authorList>
    </citation>
    <scope>X-RAY CRYSTALLOGRAPHY (2.5 ANGSTROMS) IN COMPLEXES WITH MAGNESIUM IONS AND SUBSTRATE ANALOGS</scope>
    <scope>COFACTOR</scope>
</reference>
<reference key="17">
    <citation type="journal article" date="1994" name="Proc. Natl. Acad. Sci. U.S.A.">
        <title>Crystal structure of fructose-1,6-bisphosphatase complexed with fructose 2,6-bisphosphate, AMP, and Zn2+ at 2.0-A resolution: aspects of synergism between inhibitors.</title>
        <authorList>
            <person name="Xue Y."/>
            <person name="Huang S."/>
            <person name="Liang J.-Y."/>
            <person name="Zhang Y."/>
            <person name="Lipscomb W.N."/>
        </authorList>
    </citation>
    <scope>X-RAY CRYSTALLOGRAPHY (2.0 ANGSTROMS) IN COMPLEX WITH FRUCTOSE-2,6-BISPHOSPHATE; AMP AND ZINC</scope>
    <scope>SUBUNIT</scope>
    <scope>COFACTOR</scope>
    <scope>ACTIVITY REGULATION</scope>
</reference>
<reference key="18">
    <citation type="journal article" date="2006" name="Bioorg. Med. Chem. Lett.">
        <title>Benzoxazole benzenesulfonamides as allosteric inhibitors of fructose-1,6-bisphosphatase.</title>
        <authorList>
            <person name="Lai C."/>
            <person name="Gum R.J."/>
            <person name="Daly M."/>
            <person name="Fry E.H."/>
            <person name="Hutchins C."/>
            <person name="Abad-Zapatero C."/>
            <person name="von Geldern T.W."/>
        </authorList>
    </citation>
    <scope>X-RAY CRYSTALLOGRAPHY (2.81 ANGSTROMS) IN COMPLEX WITH BENZOXAZOLE BENZENESULFONAMIDES</scope>
    <scope>SUBUNIT</scope>
    <scope>ACTIVITY REGULATION</scope>
</reference>
<reference key="19">
    <citation type="journal article" date="2006" name="Bioorg. Med. Chem. Lett.">
        <title>Benzoxazole benzenesulfonamides are novel allosteric inhibitors of fructose-1,6-bisphosphatase with a distinct binding mode.</title>
        <authorList>
            <person name="von Geldern T.W."/>
            <person name="Lai C."/>
            <person name="Gum R.J."/>
            <person name="Daly M."/>
            <person name="Sun C."/>
            <person name="Fry E.H."/>
            <person name="Abad-Zapatero C."/>
        </authorList>
    </citation>
    <scope>X-RAY CRYSTALLOGRAPHY (2.95 ANGSTROMS) IN COMPLEX WITH BENZOXAZOLE BENZENESULFONAMIDES</scope>
    <scope>SUBUNIT</scope>
    <scope>ACTIVITY REGULATION</scope>
</reference>
<reference key="20">
    <citation type="journal article" date="2008" name="Bioorg. Med. Chem. Lett.">
        <title>Allosteric FBPase inhibitors gain 10(5) times in potency when simultaneously binding two neighboring AMP sites.</title>
        <authorList>
            <person name="Hebeisen P."/>
            <person name="Kuhn B."/>
            <person name="Kohler P."/>
            <person name="Gubler M."/>
            <person name="Huber W."/>
            <person name="Kitas E."/>
            <person name="Schott B."/>
            <person name="Benz J."/>
            <person name="Joseph C."/>
            <person name="Ruf A."/>
        </authorList>
    </citation>
    <scope>X-RAY CRYSTALLOGRAPHY (2.2 ANGSTROMS) IN COMPLEX WITH AROMATIC SULFONYLUREA AMP ANALOGS</scope>
    <scope>SUBUNIT</scope>
    <scope>ACTIVITY REGULATION</scope>
</reference>
<reference key="21">
    <citation type="journal article" date="1997" name="Am. J. Hum. Genet.">
        <title>Identification of genetic mutations in Japanese patients with fructose-1,6-bisphosphatase deficiency.</title>
        <authorList>
            <person name="Kikawa Y."/>
            <person name="Inuzuka M."/>
            <person name="Jin B.Y."/>
            <person name="Kaji S."/>
            <person name="Koga J."/>
            <person name="Yamamoto Y."/>
            <person name="Fujisawa K."/>
            <person name="Hata I."/>
            <person name="Nakai A."/>
            <person name="Shigematsu Y."/>
            <person name="Mizunuma H."/>
            <person name="Taketo A."/>
            <person name="Mayumi M."/>
            <person name="Sudo M."/>
        </authorList>
    </citation>
    <scope>VARIANTS FBP1D SER-164 AND ASP-177</scope>
    <scope>VARIANT ALA-325</scope>
</reference>
<reference key="22">
    <citation type="journal article" date="2002" name="Mol. Genet. Metab.">
        <title>Two newly identified genomic mutations in a Japanese female patient with fructose-1,6-bisphosphatase (FBPase) deficiency.</title>
        <authorList>
            <person name="Matsuura T."/>
            <person name="Chinen Y."/>
            <person name="Arashiro R."/>
            <person name="Katsuren K."/>
            <person name="Tamura T."/>
            <person name="Hyakuna N."/>
            <person name="Ohta T."/>
        </authorList>
    </citation>
    <scope>VARIANTS FBP1D SER-194 AND ARG-284</scope>
</reference>
<reference key="23">
    <citation type="journal article" date="2015" name="J. Inherit. Metab. Dis.">
        <title>Fructose 1,6-bisphosphatase deficiency: clinical, biochemical and genetic features in French patients.</title>
        <authorList>
            <person name="Lebigot E."/>
            <person name="Brassier A."/>
            <person name="Zater M."/>
            <person name="Imanci D."/>
            <person name="Feillet F."/>
            <person name="Therond P."/>
            <person name="de Lonlay P."/>
            <person name="Boutron A."/>
        </authorList>
    </citation>
    <scope>VARIANT FBP1D TRP-158</scope>
</reference>
<proteinExistence type="evidence at protein level"/>